<reference key="1">
    <citation type="submission" date="2006-05" db="EMBL/GenBank/DDBJ databases">
        <title>Complete sequence of chromosome of Silicibacter sp. TM1040.</title>
        <authorList>
            <consortium name="US DOE Joint Genome Institute"/>
            <person name="Copeland A."/>
            <person name="Lucas S."/>
            <person name="Lapidus A."/>
            <person name="Barry K."/>
            <person name="Detter J.C."/>
            <person name="Glavina del Rio T."/>
            <person name="Hammon N."/>
            <person name="Israni S."/>
            <person name="Dalin E."/>
            <person name="Tice H."/>
            <person name="Pitluck S."/>
            <person name="Brettin T."/>
            <person name="Bruce D."/>
            <person name="Han C."/>
            <person name="Tapia R."/>
            <person name="Goodwin L."/>
            <person name="Thompson L.S."/>
            <person name="Gilna P."/>
            <person name="Schmutz J."/>
            <person name="Larimer F."/>
            <person name="Land M."/>
            <person name="Hauser L."/>
            <person name="Kyrpides N."/>
            <person name="Kim E."/>
            <person name="Belas R."/>
            <person name="Moran M.A."/>
            <person name="Buchan A."/>
            <person name="Gonzalez J.M."/>
            <person name="Schell M.A."/>
            <person name="Sun F."/>
            <person name="Richardson P."/>
        </authorList>
    </citation>
    <scope>NUCLEOTIDE SEQUENCE [LARGE SCALE GENOMIC DNA]</scope>
    <source>
        <strain>TM1040</strain>
    </source>
</reference>
<name>HSLU_RUEST</name>
<keyword id="KW-0067">ATP-binding</keyword>
<keyword id="KW-0143">Chaperone</keyword>
<keyword id="KW-0963">Cytoplasm</keyword>
<keyword id="KW-0547">Nucleotide-binding</keyword>
<keyword id="KW-1185">Reference proteome</keyword>
<keyword id="KW-0346">Stress response</keyword>
<organism>
    <name type="scientific">Ruegeria sp. (strain TM1040)</name>
    <name type="common">Silicibacter sp.</name>
    <dbReference type="NCBI Taxonomy" id="292414"/>
    <lineage>
        <taxon>Bacteria</taxon>
        <taxon>Pseudomonadati</taxon>
        <taxon>Pseudomonadota</taxon>
        <taxon>Alphaproteobacteria</taxon>
        <taxon>Rhodobacterales</taxon>
        <taxon>Roseobacteraceae</taxon>
        <taxon>Ruegeria</taxon>
    </lineage>
</organism>
<gene>
    <name evidence="1" type="primary">hslU</name>
    <name type="ordered locus">TM1040_2851</name>
</gene>
<dbReference type="EMBL" id="CP000377">
    <property type="protein sequence ID" value="ABF65583.1"/>
    <property type="molecule type" value="Genomic_DNA"/>
</dbReference>
<dbReference type="RefSeq" id="WP_011540164.1">
    <property type="nucleotide sequence ID" value="NC_008044.1"/>
</dbReference>
<dbReference type="SMR" id="Q1GCN3"/>
<dbReference type="STRING" id="292414.TM1040_2851"/>
<dbReference type="KEGG" id="sit:TM1040_2851"/>
<dbReference type="eggNOG" id="COG1220">
    <property type="taxonomic scope" value="Bacteria"/>
</dbReference>
<dbReference type="HOGENOM" id="CLU_033123_0_0_5"/>
<dbReference type="OrthoDB" id="9804062at2"/>
<dbReference type="Proteomes" id="UP000000636">
    <property type="component" value="Chromosome"/>
</dbReference>
<dbReference type="GO" id="GO:0009376">
    <property type="term" value="C:HslUV protease complex"/>
    <property type="evidence" value="ECO:0007669"/>
    <property type="project" value="UniProtKB-UniRule"/>
</dbReference>
<dbReference type="GO" id="GO:0005524">
    <property type="term" value="F:ATP binding"/>
    <property type="evidence" value="ECO:0007669"/>
    <property type="project" value="UniProtKB-UniRule"/>
</dbReference>
<dbReference type="GO" id="GO:0016887">
    <property type="term" value="F:ATP hydrolysis activity"/>
    <property type="evidence" value="ECO:0007669"/>
    <property type="project" value="InterPro"/>
</dbReference>
<dbReference type="GO" id="GO:0008233">
    <property type="term" value="F:peptidase activity"/>
    <property type="evidence" value="ECO:0007669"/>
    <property type="project" value="InterPro"/>
</dbReference>
<dbReference type="GO" id="GO:0036402">
    <property type="term" value="F:proteasome-activating activity"/>
    <property type="evidence" value="ECO:0007669"/>
    <property type="project" value="UniProtKB-UniRule"/>
</dbReference>
<dbReference type="GO" id="GO:0043335">
    <property type="term" value="P:protein unfolding"/>
    <property type="evidence" value="ECO:0007669"/>
    <property type="project" value="UniProtKB-UniRule"/>
</dbReference>
<dbReference type="GO" id="GO:0051603">
    <property type="term" value="P:proteolysis involved in protein catabolic process"/>
    <property type="evidence" value="ECO:0007669"/>
    <property type="project" value="TreeGrafter"/>
</dbReference>
<dbReference type="CDD" id="cd19498">
    <property type="entry name" value="RecA-like_HslU"/>
    <property type="match status" value="1"/>
</dbReference>
<dbReference type="FunFam" id="3.40.50.300:FF:000213">
    <property type="entry name" value="ATP-dependent protease ATPase subunit HslU"/>
    <property type="match status" value="1"/>
</dbReference>
<dbReference type="FunFam" id="3.40.50.300:FF:000220">
    <property type="entry name" value="ATP-dependent protease ATPase subunit HslU"/>
    <property type="match status" value="1"/>
</dbReference>
<dbReference type="Gene3D" id="1.10.8.60">
    <property type="match status" value="1"/>
</dbReference>
<dbReference type="Gene3D" id="3.40.50.300">
    <property type="entry name" value="P-loop containing nucleotide triphosphate hydrolases"/>
    <property type="match status" value="2"/>
</dbReference>
<dbReference type="HAMAP" id="MF_00249">
    <property type="entry name" value="HslU"/>
    <property type="match status" value="1"/>
</dbReference>
<dbReference type="InterPro" id="IPR003593">
    <property type="entry name" value="AAA+_ATPase"/>
</dbReference>
<dbReference type="InterPro" id="IPR050052">
    <property type="entry name" value="ATP-dep_Clp_protease_ClpX"/>
</dbReference>
<dbReference type="InterPro" id="IPR003959">
    <property type="entry name" value="ATPase_AAA_core"/>
</dbReference>
<dbReference type="InterPro" id="IPR019489">
    <property type="entry name" value="Clp_ATPase_C"/>
</dbReference>
<dbReference type="InterPro" id="IPR004491">
    <property type="entry name" value="HslU"/>
</dbReference>
<dbReference type="InterPro" id="IPR027417">
    <property type="entry name" value="P-loop_NTPase"/>
</dbReference>
<dbReference type="NCBIfam" id="TIGR00390">
    <property type="entry name" value="hslU"/>
    <property type="match status" value="1"/>
</dbReference>
<dbReference type="NCBIfam" id="NF003544">
    <property type="entry name" value="PRK05201.1"/>
    <property type="match status" value="1"/>
</dbReference>
<dbReference type="PANTHER" id="PTHR48102">
    <property type="entry name" value="ATP-DEPENDENT CLP PROTEASE ATP-BINDING SUBUNIT CLPX-LIKE, MITOCHONDRIAL-RELATED"/>
    <property type="match status" value="1"/>
</dbReference>
<dbReference type="PANTHER" id="PTHR48102:SF3">
    <property type="entry name" value="ATP-DEPENDENT PROTEASE ATPASE SUBUNIT HSLU"/>
    <property type="match status" value="1"/>
</dbReference>
<dbReference type="Pfam" id="PF00004">
    <property type="entry name" value="AAA"/>
    <property type="match status" value="1"/>
</dbReference>
<dbReference type="Pfam" id="PF07724">
    <property type="entry name" value="AAA_2"/>
    <property type="match status" value="1"/>
</dbReference>
<dbReference type="SMART" id="SM00382">
    <property type="entry name" value="AAA"/>
    <property type="match status" value="1"/>
</dbReference>
<dbReference type="SMART" id="SM01086">
    <property type="entry name" value="ClpB_D2-small"/>
    <property type="match status" value="1"/>
</dbReference>
<dbReference type="SUPFAM" id="SSF52540">
    <property type="entry name" value="P-loop containing nucleoside triphosphate hydrolases"/>
    <property type="match status" value="1"/>
</dbReference>
<evidence type="ECO:0000255" key="1">
    <source>
        <dbReference type="HAMAP-Rule" id="MF_00249"/>
    </source>
</evidence>
<accession>Q1GCN3</accession>
<comment type="function">
    <text evidence="1">ATPase subunit of a proteasome-like degradation complex; this subunit has chaperone activity. The binding of ATP and its subsequent hydrolysis by HslU are essential for unfolding of protein substrates subsequently hydrolyzed by HslV. HslU recognizes the N-terminal part of its protein substrates and unfolds these before they are guided to HslV for hydrolysis.</text>
</comment>
<comment type="subunit">
    <text evidence="1">A double ring-shaped homohexamer of HslV is capped on each side by a ring-shaped HslU homohexamer. The assembly of the HslU/HslV complex is dependent on binding of ATP.</text>
</comment>
<comment type="subcellular location">
    <subcellularLocation>
        <location evidence="1">Cytoplasm</location>
    </subcellularLocation>
</comment>
<comment type="similarity">
    <text evidence="1">Belongs to the ClpX chaperone family. HslU subfamily.</text>
</comment>
<feature type="chain" id="PRO_1000012814" description="ATP-dependent protease ATPase subunit HslU">
    <location>
        <begin position="1"/>
        <end position="436"/>
    </location>
</feature>
<feature type="binding site" evidence="1">
    <location>
        <position position="18"/>
    </location>
    <ligand>
        <name>ATP</name>
        <dbReference type="ChEBI" id="CHEBI:30616"/>
    </ligand>
</feature>
<feature type="binding site" evidence="1">
    <location>
        <begin position="60"/>
        <end position="65"/>
    </location>
    <ligand>
        <name>ATP</name>
        <dbReference type="ChEBI" id="CHEBI:30616"/>
    </ligand>
</feature>
<feature type="binding site" evidence="1">
    <location>
        <position position="249"/>
    </location>
    <ligand>
        <name>ATP</name>
        <dbReference type="ChEBI" id="CHEBI:30616"/>
    </ligand>
</feature>
<feature type="binding site" evidence="1">
    <location>
        <position position="314"/>
    </location>
    <ligand>
        <name>ATP</name>
        <dbReference type="ChEBI" id="CHEBI:30616"/>
    </ligand>
</feature>
<feature type="binding site" evidence="1">
    <location>
        <position position="386"/>
    </location>
    <ligand>
        <name>ATP</name>
        <dbReference type="ChEBI" id="CHEBI:30616"/>
    </ligand>
</feature>
<sequence length="436" mass="48368">MTDLTPREIVSELDRFIIGQKDAKRAVAVALRNRWRRKQLPDDLRDEVHPKNILMIGPTGVGKTEISRRLAKLARAPFIKVEATKFTEVGYVGRDVEQIVRDLVDTAIVQTREHMREDVKAKAHKAAEDRVLEAIAGTDARESTLEMFRKKLKAGELDDTVIELDIADTSNPMGGMFEIPGQPGANMGMMNLGDLFGKAMGGRTTRKKLTVAESYDVLIGEEADKLLDDETVNKAALEAVEQNGIVFLDEIDKVCARSDARGGDVSREGVQRDLLPLIEGTTVSTKHGPVKTDHILFIASGAFHIAKPSDLLPELQGRLPIRVNLRALSEEDFVRILTETDNALTRQYEALLGTEKVKVTFTKDGIHALAQIAAEVNHTVENIGARRLYTVMERVFEEMSFAAPDRSGEEIIVDEPFVTKNLGELTKSTDLSRYVL</sequence>
<protein>
    <recommendedName>
        <fullName evidence="1">ATP-dependent protease ATPase subunit HslU</fullName>
    </recommendedName>
    <alternativeName>
        <fullName evidence="1">Unfoldase HslU</fullName>
    </alternativeName>
</protein>
<proteinExistence type="inferred from homology"/>